<protein>
    <recommendedName>
        <fullName>Convicilin</fullName>
    </recommendedName>
</protein>
<gene>
    <name type="primary">CVCB</name>
</gene>
<proteinExistence type="evidence at transcript level"/>
<keyword id="KW-0708">Seed storage protein</keyword>
<keyword id="KW-0732">Signal</keyword>
<keyword id="KW-0758">Storage protein</keyword>
<keyword id="KW-0926">Vacuole</keyword>
<feature type="signal peptide" evidence="1">
    <location>
        <begin position="1"/>
        <end position="29"/>
    </location>
</feature>
<feature type="chain" id="PRO_0000032185" description="Convicilin">
    <location>
        <begin position="30"/>
        <end position="386" status="greater than"/>
    </location>
</feature>
<feature type="domain" description="Cupin type-1" evidence="1">
    <location>
        <begin position="202"/>
        <end position="359"/>
    </location>
</feature>
<feature type="region of interest" description="Disordered" evidence="2">
    <location>
        <begin position="33"/>
        <end position="199"/>
    </location>
</feature>
<feature type="region of interest" description="Disordered" evidence="2">
    <location>
        <begin position="367"/>
        <end position="386"/>
    </location>
</feature>
<feature type="compositionally biased region" description="Basic and acidic residues" evidence="2">
    <location>
        <begin position="41"/>
        <end position="65"/>
    </location>
</feature>
<feature type="compositionally biased region" description="Basic and acidic residues" evidence="2">
    <location>
        <begin position="74"/>
        <end position="91"/>
    </location>
</feature>
<feature type="compositionally biased region" description="Basic and acidic residues" evidence="2">
    <location>
        <begin position="104"/>
        <end position="144"/>
    </location>
</feature>
<feature type="compositionally biased region" description="Basic and acidic residues" evidence="2">
    <location>
        <begin position="153"/>
        <end position="186"/>
    </location>
</feature>
<feature type="non-terminal residue">
    <location>
        <position position="386"/>
    </location>
</feature>
<evidence type="ECO:0000255" key="1"/>
<evidence type="ECO:0000256" key="2">
    <source>
        <dbReference type="SAM" id="MobiDB-lite"/>
    </source>
</evidence>
<evidence type="ECO:0000305" key="3"/>
<accession>P13919</accession>
<reference key="1">
    <citation type="journal article" date="1990" name="Planta">
        <title>Pea convicilin: structure and primary sequence of the protein and expression of a gene in the seeds of transgenic tobacco.</title>
        <authorList>
            <person name="Newbigin E.J."/>
            <person name="Delumen B.O."/>
            <person name="Chandler P.M."/>
            <person name="Gould A."/>
            <person name="Blagrove R.J."/>
            <person name="March J.F."/>
            <person name="Kortt A.A."/>
            <person name="Higgins T.J."/>
        </authorList>
    </citation>
    <scope>NUCLEOTIDE SEQUENCE OF 1-296</scope>
</reference>
<reference key="2">
    <citation type="journal article" date="1984" name="Biochem. J.">
        <title>Convicilin mRNA from pea (Pisum sativum L.) has sequence homology with other legume 7S storage protein mRNA species.</title>
        <authorList>
            <person name="Casey R."/>
            <person name="Domoney C."/>
            <person name="Stanley J."/>
        </authorList>
    </citation>
    <scope>NUCLEOTIDE SEQUENCE OF 191-386</scope>
    <source>
        <strain>cv. Feltham First</strain>
    </source>
</reference>
<comment type="function">
    <text>Seed storage protein.</text>
</comment>
<comment type="subcellular location">
    <subcellularLocation>
        <location>Vacuole</location>
        <location>Aleurone grain</location>
    </subcellularLocation>
    <subcellularLocation>
        <location>Vacuole</location>
    </subcellularLocation>
    <text>Cotyledonary membrane-bound vacuolar protein bodies.</text>
</comment>
<comment type="similarity">
    <text evidence="3">Belongs to the 7S seed storage protein family.</text>
</comment>
<dbReference type="EMBL" id="M73805">
    <property type="protein sequence ID" value="AAA33660.1"/>
    <property type="molecule type" value="Genomic_DNA"/>
</dbReference>
<dbReference type="EMBL" id="X01379">
    <property type="protein sequence ID" value="CAB38247.1"/>
    <property type="molecule type" value="mRNA"/>
</dbReference>
<dbReference type="PIR" id="S02281">
    <property type="entry name" value="S02281"/>
</dbReference>
<dbReference type="PIR" id="T06572">
    <property type="entry name" value="T06572"/>
</dbReference>
<dbReference type="SMR" id="P13919"/>
<dbReference type="GO" id="GO:0033095">
    <property type="term" value="C:aleurone grain"/>
    <property type="evidence" value="ECO:0007669"/>
    <property type="project" value="UniProtKB-SubCell"/>
</dbReference>
<dbReference type="GO" id="GO:0005773">
    <property type="term" value="C:vacuole"/>
    <property type="evidence" value="ECO:0007669"/>
    <property type="project" value="UniProtKB-SubCell"/>
</dbReference>
<dbReference type="GO" id="GO:0045735">
    <property type="term" value="F:nutrient reservoir activity"/>
    <property type="evidence" value="ECO:0007669"/>
    <property type="project" value="UniProtKB-KW"/>
</dbReference>
<dbReference type="CDD" id="cd02244">
    <property type="entry name" value="cupin_7S_vicilin-like_N"/>
    <property type="match status" value="1"/>
</dbReference>
<dbReference type="Gene3D" id="2.60.120.10">
    <property type="entry name" value="Jelly Rolls"/>
    <property type="match status" value="1"/>
</dbReference>
<dbReference type="InterPro" id="IPR006045">
    <property type="entry name" value="Cupin_1"/>
</dbReference>
<dbReference type="InterPro" id="IPR014710">
    <property type="entry name" value="RmlC-like_jellyroll"/>
</dbReference>
<dbReference type="InterPro" id="IPR011051">
    <property type="entry name" value="RmlC_Cupin_sf"/>
</dbReference>
<dbReference type="InterPro" id="IPR050253">
    <property type="entry name" value="Seed_Storage-Functional"/>
</dbReference>
<dbReference type="PANTHER" id="PTHR31189">
    <property type="entry name" value="OS03G0336100 PROTEIN-RELATED"/>
    <property type="match status" value="1"/>
</dbReference>
<dbReference type="PANTHER" id="PTHR31189:SF41">
    <property type="entry name" value="VICILIN C72"/>
    <property type="match status" value="1"/>
</dbReference>
<dbReference type="SMART" id="SM00835">
    <property type="entry name" value="Cupin_1"/>
    <property type="match status" value="1"/>
</dbReference>
<dbReference type="SUPFAM" id="SSF51182">
    <property type="entry name" value="RmlC-like cupins"/>
    <property type="match status" value="1"/>
</dbReference>
<organism>
    <name type="scientific">Pisum sativum</name>
    <name type="common">Garden pea</name>
    <name type="synonym">Lathyrus oleraceus</name>
    <dbReference type="NCBI Taxonomy" id="3888"/>
    <lineage>
        <taxon>Eukaryota</taxon>
        <taxon>Viridiplantae</taxon>
        <taxon>Streptophyta</taxon>
        <taxon>Embryophyta</taxon>
        <taxon>Tracheophyta</taxon>
        <taxon>Spermatophyta</taxon>
        <taxon>Magnoliopsida</taxon>
        <taxon>eudicotyledons</taxon>
        <taxon>Gunneridae</taxon>
        <taxon>Pentapetalae</taxon>
        <taxon>rosids</taxon>
        <taxon>fabids</taxon>
        <taxon>Fabales</taxon>
        <taxon>Fabaceae</taxon>
        <taxon>Papilionoideae</taxon>
        <taxon>50 kb inversion clade</taxon>
        <taxon>NPAAA clade</taxon>
        <taxon>Hologalegina</taxon>
        <taxon>IRL clade</taxon>
        <taxon>Fabeae</taxon>
        <taxon>Pisum</taxon>
    </lineage>
</organism>
<name>CVCB_PEA</name>
<sequence>MATTIKSRFPLLLLLGIIFLASVVSVTYANYDEGSEPRVPAQRERGRQEGEKEEKRHGEWRPSYEKEEDEEEGQRERGRQEGEKEEKRHGEWGPSYEKQEDEEEKQKYRYQREKEDEEEKQKYQYQREKKEQKEVQPGRERWEREEDEEQVDEEWRGSQRREDPEERARLRHREERTKRDRRHQREGEEEERSSESQERRNPFLFKSNKFLTLFENENGHIRLLQRFDKRSDLFENLQNYRLVEYRAKPHTIFLPQHIDADLILVVLSGKAILTVLSPNDRNSYNLERGDTIKLPAGTTSYLVNQDDEEDLRLVDLVIPVNGPGKFEAFDLAKNKNQYLRGFSKNILEASYNTRYETIEKVLLEEQEKDRKRRQQGEETDAIVKVS</sequence>